<keyword id="KW-0560">Oxidoreductase</keyword>
<keyword id="KW-0663">Pyridoxal phosphate</keyword>
<sequence length="957" mass="104286">MTQTLSQLENRGAFIERHIGPDAVQQQEMLNAVGAESLNALTGQIVPKDIQLATPPQVGEAATEYAALAELKAIAGRNKRFTSYIGMGYTAVQLPPVILRNMLENPGWYTAYTPYQPEVSQGRLEALLNFQQVTLDLTGLDMASASLLDEATAAAEAMAMAKRVSKLKNANRFFVASDVHPQTLDVVRTRAETFGFDVIVDDAAKALDHQDVFGVLLQQVGSTGEIHDYSALISELKARKVVVSVAADFMALVLLTAPGKQGADIVFGSAQRFGVPMGYGGPHAAFFAAKDEFKRSMPGRIIGVSKDAAGNTALRMAMQTREQHIRREKANSNICTSQVLLANIASLYAVYHGPVGLKRIANRIHRLTDILAAGLQQKGLKLRHAHYFDTLCVEVADKAAVLARAEAAEINLRSDIHNAVGITLDETTTRENVAQLFNVLLGDSHGLNIETLDKDVALDSRSIQQSMLRDDAILTHPVFNRYHSETEMMRYMHSLERKDLALNQAMIPLGSCTMKLNAAAEMIPITWPEFAELHPFCPPEQAEGYHQMISQLSDWLVKLTGYDAVCMQPNSGAQGEYAGLLAIRHYHESRNEGHRDICLIPASAHGTNPASAHMAGMQVVVVACDKNGNIDLDDLRAKAEQHAANLSCIMVTYPSTHGVYEETIREVCEVVHQFGGQVYLDGANMNAQVGITSPGFIGADVSHLNLHKTFCIPHGGGGPGMGPIGVKAHLAPFVPGHSVVQIEGMLTRQGAVSAAPFGSASILPISWMYIRMMGAEGLKQASQVAILNANYIASRLKDAYPVLYTGRDGRVAHECILDIRPLKEETGISELDIAKRLIDYGFHAPTMSFPVAGTLMVEPTESEGKAELDRFIDAMLAIRAEIDQVKAGVWPQEDNPLVNAPHIQSELVAEWAHPYSREVAVFPAGVADKYWPTVKRLDDVYGDRNLFCSCVPISDYQ</sequence>
<evidence type="ECO:0000255" key="1">
    <source>
        <dbReference type="HAMAP-Rule" id="MF_00711"/>
    </source>
</evidence>
<dbReference type="EC" id="1.4.4.2" evidence="1"/>
<dbReference type="EMBL" id="CP001113">
    <property type="protein sequence ID" value="ACF64269.1"/>
    <property type="molecule type" value="Genomic_DNA"/>
</dbReference>
<dbReference type="RefSeq" id="WP_000194985.1">
    <property type="nucleotide sequence ID" value="NZ_CCMR01000001.1"/>
</dbReference>
<dbReference type="SMR" id="B4T548"/>
<dbReference type="KEGG" id="see:SNSL254_A3288"/>
<dbReference type="HOGENOM" id="CLU_004620_3_2_6"/>
<dbReference type="Proteomes" id="UP000008824">
    <property type="component" value="Chromosome"/>
</dbReference>
<dbReference type="GO" id="GO:0005829">
    <property type="term" value="C:cytosol"/>
    <property type="evidence" value="ECO:0007669"/>
    <property type="project" value="TreeGrafter"/>
</dbReference>
<dbReference type="GO" id="GO:0005960">
    <property type="term" value="C:glycine cleavage complex"/>
    <property type="evidence" value="ECO:0007669"/>
    <property type="project" value="TreeGrafter"/>
</dbReference>
<dbReference type="GO" id="GO:0016594">
    <property type="term" value="F:glycine binding"/>
    <property type="evidence" value="ECO:0007669"/>
    <property type="project" value="TreeGrafter"/>
</dbReference>
<dbReference type="GO" id="GO:0004375">
    <property type="term" value="F:glycine dehydrogenase (decarboxylating) activity"/>
    <property type="evidence" value="ECO:0007669"/>
    <property type="project" value="UniProtKB-EC"/>
</dbReference>
<dbReference type="GO" id="GO:0030170">
    <property type="term" value="F:pyridoxal phosphate binding"/>
    <property type="evidence" value="ECO:0007669"/>
    <property type="project" value="TreeGrafter"/>
</dbReference>
<dbReference type="GO" id="GO:0019464">
    <property type="term" value="P:glycine decarboxylation via glycine cleavage system"/>
    <property type="evidence" value="ECO:0007669"/>
    <property type="project" value="UniProtKB-UniRule"/>
</dbReference>
<dbReference type="CDD" id="cd00613">
    <property type="entry name" value="GDC-P"/>
    <property type="match status" value="2"/>
</dbReference>
<dbReference type="FunFam" id="3.40.640.10:FF:000005">
    <property type="entry name" value="Glycine dehydrogenase (decarboxylating), mitochondrial"/>
    <property type="match status" value="1"/>
</dbReference>
<dbReference type="FunFam" id="3.90.1150.10:FF:000007">
    <property type="entry name" value="Glycine dehydrogenase (decarboxylating), mitochondrial"/>
    <property type="match status" value="1"/>
</dbReference>
<dbReference type="FunFam" id="3.40.640.10:FF:000007">
    <property type="entry name" value="glycine dehydrogenase (Decarboxylating), mitochondrial"/>
    <property type="match status" value="1"/>
</dbReference>
<dbReference type="Gene3D" id="3.90.1150.10">
    <property type="entry name" value="Aspartate Aminotransferase, domain 1"/>
    <property type="match status" value="1"/>
</dbReference>
<dbReference type="Gene3D" id="3.40.640.10">
    <property type="entry name" value="Type I PLP-dependent aspartate aminotransferase-like (Major domain)"/>
    <property type="match status" value="2"/>
</dbReference>
<dbReference type="HAMAP" id="MF_00711">
    <property type="entry name" value="GcvP"/>
    <property type="match status" value="1"/>
</dbReference>
<dbReference type="InterPro" id="IPR003437">
    <property type="entry name" value="GcvP"/>
</dbReference>
<dbReference type="InterPro" id="IPR049316">
    <property type="entry name" value="GDC-P_C"/>
</dbReference>
<dbReference type="InterPro" id="IPR049315">
    <property type="entry name" value="GDC-P_N"/>
</dbReference>
<dbReference type="InterPro" id="IPR020581">
    <property type="entry name" value="GDC_P"/>
</dbReference>
<dbReference type="InterPro" id="IPR015424">
    <property type="entry name" value="PyrdxlP-dep_Trfase"/>
</dbReference>
<dbReference type="InterPro" id="IPR015421">
    <property type="entry name" value="PyrdxlP-dep_Trfase_major"/>
</dbReference>
<dbReference type="InterPro" id="IPR015422">
    <property type="entry name" value="PyrdxlP-dep_Trfase_small"/>
</dbReference>
<dbReference type="NCBIfam" id="TIGR00461">
    <property type="entry name" value="gcvP"/>
    <property type="match status" value="1"/>
</dbReference>
<dbReference type="NCBIfam" id="NF003346">
    <property type="entry name" value="PRK04366.1"/>
    <property type="match status" value="1"/>
</dbReference>
<dbReference type="PANTHER" id="PTHR11773:SF13">
    <property type="entry name" value="GLYCINE DEHYDROGENASE (DECARBOXYLATING)"/>
    <property type="match status" value="1"/>
</dbReference>
<dbReference type="PANTHER" id="PTHR11773">
    <property type="entry name" value="GLYCINE DEHYDROGENASE, DECARBOXYLATING"/>
    <property type="match status" value="1"/>
</dbReference>
<dbReference type="Pfam" id="PF21478">
    <property type="entry name" value="GcvP2_C"/>
    <property type="match status" value="1"/>
</dbReference>
<dbReference type="Pfam" id="PF02347">
    <property type="entry name" value="GDC-P"/>
    <property type="match status" value="2"/>
</dbReference>
<dbReference type="SUPFAM" id="SSF53383">
    <property type="entry name" value="PLP-dependent transferases"/>
    <property type="match status" value="2"/>
</dbReference>
<reference key="1">
    <citation type="journal article" date="2011" name="J. Bacteriol.">
        <title>Comparative genomics of 28 Salmonella enterica isolates: evidence for CRISPR-mediated adaptive sublineage evolution.</title>
        <authorList>
            <person name="Fricke W.F."/>
            <person name="Mammel M.K."/>
            <person name="McDermott P.F."/>
            <person name="Tartera C."/>
            <person name="White D.G."/>
            <person name="Leclerc J.E."/>
            <person name="Ravel J."/>
            <person name="Cebula T.A."/>
        </authorList>
    </citation>
    <scope>NUCLEOTIDE SEQUENCE [LARGE SCALE GENOMIC DNA]</scope>
    <source>
        <strain>SL254</strain>
    </source>
</reference>
<accession>B4T548</accession>
<feature type="chain" id="PRO_1000132455" description="Glycine dehydrogenase (decarboxylating)">
    <location>
        <begin position="1"/>
        <end position="957"/>
    </location>
</feature>
<feature type="modified residue" description="N6-(pyridoxal phosphate)lysine" evidence="1">
    <location>
        <position position="708"/>
    </location>
</feature>
<proteinExistence type="inferred from homology"/>
<organism>
    <name type="scientific">Salmonella newport (strain SL254)</name>
    <dbReference type="NCBI Taxonomy" id="423368"/>
    <lineage>
        <taxon>Bacteria</taxon>
        <taxon>Pseudomonadati</taxon>
        <taxon>Pseudomonadota</taxon>
        <taxon>Gammaproteobacteria</taxon>
        <taxon>Enterobacterales</taxon>
        <taxon>Enterobacteriaceae</taxon>
        <taxon>Salmonella</taxon>
    </lineage>
</organism>
<gene>
    <name evidence="1" type="primary">gcvP</name>
    <name type="ordered locus">SNSL254_A3288</name>
</gene>
<name>GCSP_SALNS</name>
<comment type="function">
    <text evidence="1">The glycine cleavage system catalyzes the degradation of glycine. The P protein binds the alpha-amino group of glycine through its pyridoxal phosphate cofactor; CO(2) is released and the remaining methylamine moiety is then transferred to the lipoamide cofactor of the H protein.</text>
</comment>
<comment type="catalytic activity">
    <reaction evidence="1">
        <text>N(6)-[(R)-lipoyl]-L-lysyl-[glycine-cleavage complex H protein] + glycine + H(+) = N(6)-[(R)-S(8)-aminomethyldihydrolipoyl]-L-lysyl-[glycine-cleavage complex H protein] + CO2</text>
        <dbReference type="Rhea" id="RHEA:24304"/>
        <dbReference type="Rhea" id="RHEA-COMP:10494"/>
        <dbReference type="Rhea" id="RHEA-COMP:10495"/>
        <dbReference type="ChEBI" id="CHEBI:15378"/>
        <dbReference type="ChEBI" id="CHEBI:16526"/>
        <dbReference type="ChEBI" id="CHEBI:57305"/>
        <dbReference type="ChEBI" id="CHEBI:83099"/>
        <dbReference type="ChEBI" id="CHEBI:83143"/>
        <dbReference type="EC" id="1.4.4.2"/>
    </reaction>
</comment>
<comment type="cofactor">
    <cofactor evidence="1">
        <name>pyridoxal 5'-phosphate</name>
        <dbReference type="ChEBI" id="CHEBI:597326"/>
    </cofactor>
</comment>
<comment type="subunit">
    <text evidence="1">The glycine cleavage system is composed of four proteins: P, T, L and H.</text>
</comment>
<comment type="similarity">
    <text evidence="1">Belongs to the GcvP family.</text>
</comment>
<protein>
    <recommendedName>
        <fullName evidence="1">Glycine dehydrogenase (decarboxylating)</fullName>
        <ecNumber evidence="1">1.4.4.2</ecNumber>
    </recommendedName>
    <alternativeName>
        <fullName evidence="1">Glycine cleavage system P-protein</fullName>
    </alternativeName>
    <alternativeName>
        <fullName evidence="1">Glycine decarboxylase</fullName>
    </alternativeName>
    <alternativeName>
        <fullName evidence="1">Glycine dehydrogenase (aminomethyl-transferring)</fullName>
    </alternativeName>
</protein>